<comment type="function">
    <text evidence="1">Required for the morphogenesis and for the elongation of the flagellar filament by facilitating polymerization of the flagellin monomers at the tip of growing filament. Forms a capping structure, which prevents flagellin subunits (transported through the central channel of the flagellum) from leaking out without polymerization at the distal end (By similarity).</text>
</comment>
<comment type="subunit">
    <text evidence="3">Homopentamer.</text>
</comment>
<comment type="subcellular location">
    <subcellularLocation>
        <location>Secreted</location>
    </subcellularLocation>
    <subcellularLocation>
        <location>Bacterial flagellum</location>
    </subcellularLocation>
</comment>
<comment type="similarity">
    <text evidence="3">Belongs to the FliD family.</text>
</comment>
<accession>P58297</accession>
<gene>
    <name type="primary">fliD</name>
    <name type="synonym">flaV</name>
    <name type="synonym">flbC</name>
    <name type="ordered locus">Z3014</name>
    <name type="ordered locus">ECs2663</name>
</gene>
<dbReference type="EMBL" id="AE005174">
    <property type="protein sequence ID" value="AAG56939.1"/>
    <property type="molecule type" value="Genomic_DNA"/>
</dbReference>
<dbReference type="EMBL" id="BA000007">
    <property type="protein sequence ID" value="BAB36086.1"/>
    <property type="molecule type" value="Genomic_DNA"/>
</dbReference>
<dbReference type="PIR" id="G85809">
    <property type="entry name" value="G85809"/>
</dbReference>
<dbReference type="PIR" id="G90961">
    <property type="entry name" value="G90961"/>
</dbReference>
<dbReference type="RefSeq" id="NP_310690.1">
    <property type="nucleotide sequence ID" value="NC_002695.1"/>
</dbReference>
<dbReference type="RefSeq" id="WP_000146755.1">
    <property type="nucleotide sequence ID" value="NZ_VOAI01000028.1"/>
</dbReference>
<dbReference type="SMR" id="P58297"/>
<dbReference type="STRING" id="155864.Z3014"/>
<dbReference type="GeneID" id="913755"/>
<dbReference type="KEGG" id="ece:Z3014"/>
<dbReference type="KEGG" id="ecs:ECs_2663"/>
<dbReference type="PATRIC" id="fig|386585.9.peg.2791"/>
<dbReference type="eggNOG" id="COG1345">
    <property type="taxonomic scope" value="Bacteria"/>
</dbReference>
<dbReference type="HOGENOM" id="CLU_015182_8_1_6"/>
<dbReference type="OMA" id="GGRQQIW"/>
<dbReference type="Proteomes" id="UP000000558">
    <property type="component" value="Chromosome"/>
</dbReference>
<dbReference type="Proteomes" id="UP000002519">
    <property type="component" value="Chromosome"/>
</dbReference>
<dbReference type="GO" id="GO:0009421">
    <property type="term" value="C:bacterial-type flagellum filament cap"/>
    <property type="evidence" value="ECO:0007669"/>
    <property type="project" value="InterPro"/>
</dbReference>
<dbReference type="GO" id="GO:0009424">
    <property type="term" value="C:bacterial-type flagellum hook"/>
    <property type="evidence" value="ECO:0007669"/>
    <property type="project" value="InterPro"/>
</dbReference>
<dbReference type="GO" id="GO:0005576">
    <property type="term" value="C:extracellular region"/>
    <property type="evidence" value="ECO:0007669"/>
    <property type="project" value="UniProtKB-SubCell"/>
</dbReference>
<dbReference type="GO" id="GO:0071973">
    <property type="term" value="P:bacterial-type flagellum-dependent cell motility"/>
    <property type="evidence" value="ECO:0007669"/>
    <property type="project" value="TreeGrafter"/>
</dbReference>
<dbReference type="GO" id="GO:0007155">
    <property type="term" value="P:cell adhesion"/>
    <property type="evidence" value="ECO:0007669"/>
    <property type="project" value="InterPro"/>
</dbReference>
<dbReference type="InterPro" id="IPR040026">
    <property type="entry name" value="FliD"/>
</dbReference>
<dbReference type="InterPro" id="IPR010809">
    <property type="entry name" value="FliD_C"/>
</dbReference>
<dbReference type="InterPro" id="IPR003481">
    <property type="entry name" value="FliD_N"/>
</dbReference>
<dbReference type="NCBIfam" id="NF005955">
    <property type="entry name" value="PRK08032.1"/>
    <property type="match status" value="1"/>
</dbReference>
<dbReference type="PANTHER" id="PTHR30288">
    <property type="entry name" value="FLAGELLAR CAP/ASSEMBLY PROTEIN FLID"/>
    <property type="match status" value="1"/>
</dbReference>
<dbReference type="PANTHER" id="PTHR30288:SF0">
    <property type="entry name" value="FLAGELLAR HOOK-ASSOCIATED PROTEIN 2"/>
    <property type="match status" value="1"/>
</dbReference>
<dbReference type="Pfam" id="PF07195">
    <property type="entry name" value="FliD_C"/>
    <property type="match status" value="1"/>
</dbReference>
<dbReference type="Pfam" id="PF02465">
    <property type="entry name" value="FliD_N"/>
    <property type="match status" value="1"/>
</dbReference>
<feature type="initiator methionine" description="Removed" evidence="1">
    <location>
        <position position="1"/>
    </location>
</feature>
<feature type="chain" id="PRO_0000177018" description="Flagellar hook-associated protein 2">
    <location>
        <begin position="2"/>
        <end position="465"/>
    </location>
</feature>
<feature type="coiled-coil region" evidence="2">
    <location>
        <begin position="408"/>
        <end position="436"/>
    </location>
</feature>
<reference key="1">
    <citation type="journal article" date="2001" name="Nature">
        <title>Genome sequence of enterohaemorrhagic Escherichia coli O157:H7.</title>
        <authorList>
            <person name="Perna N.T."/>
            <person name="Plunkett G. III"/>
            <person name="Burland V."/>
            <person name="Mau B."/>
            <person name="Glasner J.D."/>
            <person name="Rose D.J."/>
            <person name="Mayhew G.F."/>
            <person name="Evans P.S."/>
            <person name="Gregor J."/>
            <person name="Kirkpatrick H.A."/>
            <person name="Posfai G."/>
            <person name="Hackett J."/>
            <person name="Klink S."/>
            <person name="Boutin A."/>
            <person name="Shao Y."/>
            <person name="Miller L."/>
            <person name="Grotbeck E.J."/>
            <person name="Davis N.W."/>
            <person name="Lim A."/>
            <person name="Dimalanta E.T."/>
            <person name="Potamousis K."/>
            <person name="Apodaca J."/>
            <person name="Anantharaman T.S."/>
            <person name="Lin J."/>
            <person name="Yen G."/>
            <person name="Schwartz D.C."/>
            <person name="Welch R.A."/>
            <person name="Blattner F.R."/>
        </authorList>
    </citation>
    <scope>NUCLEOTIDE SEQUENCE [LARGE SCALE GENOMIC DNA]</scope>
    <source>
        <strain>O157:H7 / EDL933 / ATCC 700927 / EHEC</strain>
    </source>
</reference>
<reference key="2">
    <citation type="journal article" date="2001" name="DNA Res.">
        <title>Complete genome sequence of enterohemorrhagic Escherichia coli O157:H7 and genomic comparison with a laboratory strain K-12.</title>
        <authorList>
            <person name="Hayashi T."/>
            <person name="Makino K."/>
            <person name="Ohnishi M."/>
            <person name="Kurokawa K."/>
            <person name="Ishii K."/>
            <person name="Yokoyama K."/>
            <person name="Han C.-G."/>
            <person name="Ohtsubo E."/>
            <person name="Nakayama K."/>
            <person name="Murata T."/>
            <person name="Tanaka M."/>
            <person name="Tobe T."/>
            <person name="Iida T."/>
            <person name="Takami H."/>
            <person name="Honda T."/>
            <person name="Sasakawa C."/>
            <person name="Ogasawara N."/>
            <person name="Yasunaga T."/>
            <person name="Kuhara S."/>
            <person name="Shiba T."/>
            <person name="Hattori M."/>
            <person name="Shinagawa H."/>
        </authorList>
    </citation>
    <scope>NUCLEOTIDE SEQUENCE [LARGE SCALE GENOMIC DNA]</scope>
    <source>
        <strain>O157:H7 / Sakai / RIMD 0509952 / EHEC</strain>
    </source>
</reference>
<evidence type="ECO:0000250" key="1"/>
<evidence type="ECO:0000255" key="2"/>
<evidence type="ECO:0000305" key="3"/>
<organism>
    <name type="scientific">Escherichia coli O157:H7</name>
    <dbReference type="NCBI Taxonomy" id="83334"/>
    <lineage>
        <taxon>Bacteria</taxon>
        <taxon>Pseudomonadati</taxon>
        <taxon>Pseudomonadota</taxon>
        <taxon>Gammaproteobacteria</taxon>
        <taxon>Enterobacterales</taxon>
        <taxon>Enterobacteriaceae</taxon>
        <taxon>Escherichia</taxon>
    </lineage>
</organism>
<proteinExistence type="inferred from homology"/>
<keyword id="KW-0975">Bacterial flagellum</keyword>
<keyword id="KW-0175">Coiled coil</keyword>
<keyword id="KW-1185">Reference proteome</keyword>
<keyword id="KW-0964">Secreted</keyword>
<name>FLID_ECO57</name>
<protein>
    <recommendedName>
        <fullName>Flagellar hook-associated protein 2</fullName>
        <shortName>HAP2</shortName>
    </recommendedName>
    <alternativeName>
        <fullName>Filament cap protein</fullName>
    </alternativeName>
    <alternativeName>
        <fullName>Flagellar cap protein</fullName>
    </alternativeName>
</protein>
<sequence length="465" mass="48153">MASISSLGVGSGLDLSSILDSLTAAQKATLTPISNQQSSFTAKLSAYGTLKSALTTFQTANTALSKADLFSATSSTTAFSATTAGNAIAGKYTISVTHLAQAQTLTTRTTRDDTKTAIATSDSKLTIQQGGDKDPITIDISAANSSLSGIRDAINNAKAGVSASIINVGNGDYRLSVTSNDTGLDNAMTLSVSGDDALQSFMGYDASASSNGMEVSVAAQNAQLTVNNVAIENSSNTISDALENITLNLNDVTTGNQTLTITQDTSKAQTAIKDWVNAYNSLIDTFSSLTKYTAVDAGADSQSSSNGALLGDSTLRTIQTQLKSMLSNTVSSSSYKTLAQIGITTDPSDGKLELDADKLTAALKKDASGVGALIVGDGKKTGITTTIGSNLTSWLSTTGIIKAATDGVSKTLNKLTKDYNAASDRIDAQVARYKEQFTQLDVLMTSLNSTSSYLTQQFENNSNSK</sequence>